<gene>
    <name evidence="1" type="primary">nfo</name>
    <name type="ordered locus">SeD_A2553</name>
</gene>
<accession>B5FNK8</accession>
<evidence type="ECO:0000255" key="1">
    <source>
        <dbReference type="HAMAP-Rule" id="MF_00152"/>
    </source>
</evidence>
<dbReference type="EC" id="3.1.21.2" evidence="1"/>
<dbReference type="EMBL" id="CP001144">
    <property type="protein sequence ID" value="ACH75849.1"/>
    <property type="molecule type" value="Genomic_DNA"/>
</dbReference>
<dbReference type="RefSeq" id="WP_000873915.1">
    <property type="nucleotide sequence ID" value="NC_011205.1"/>
</dbReference>
<dbReference type="SMR" id="B5FNK8"/>
<dbReference type="KEGG" id="sed:SeD_A2553"/>
<dbReference type="HOGENOM" id="CLU_025885_0_4_6"/>
<dbReference type="Proteomes" id="UP000008322">
    <property type="component" value="Chromosome"/>
</dbReference>
<dbReference type="GO" id="GO:0008833">
    <property type="term" value="F:deoxyribonuclease IV (phage-T4-induced) activity"/>
    <property type="evidence" value="ECO:0007669"/>
    <property type="project" value="UniProtKB-UniRule"/>
</dbReference>
<dbReference type="GO" id="GO:0003677">
    <property type="term" value="F:DNA binding"/>
    <property type="evidence" value="ECO:0007669"/>
    <property type="project" value="InterPro"/>
</dbReference>
<dbReference type="GO" id="GO:0003906">
    <property type="term" value="F:DNA-(apurinic or apyrimidinic site) endonuclease activity"/>
    <property type="evidence" value="ECO:0007669"/>
    <property type="project" value="TreeGrafter"/>
</dbReference>
<dbReference type="GO" id="GO:0008081">
    <property type="term" value="F:phosphoric diester hydrolase activity"/>
    <property type="evidence" value="ECO:0007669"/>
    <property type="project" value="TreeGrafter"/>
</dbReference>
<dbReference type="GO" id="GO:0008270">
    <property type="term" value="F:zinc ion binding"/>
    <property type="evidence" value="ECO:0007669"/>
    <property type="project" value="UniProtKB-UniRule"/>
</dbReference>
<dbReference type="GO" id="GO:0006284">
    <property type="term" value="P:base-excision repair"/>
    <property type="evidence" value="ECO:0007669"/>
    <property type="project" value="TreeGrafter"/>
</dbReference>
<dbReference type="CDD" id="cd00019">
    <property type="entry name" value="AP2Ec"/>
    <property type="match status" value="1"/>
</dbReference>
<dbReference type="FunFam" id="3.20.20.150:FF:000001">
    <property type="entry name" value="Probable endonuclease 4"/>
    <property type="match status" value="1"/>
</dbReference>
<dbReference type="Gene3D" id="3.20.20.150">
    <property type="entry name" value="Divalent-metal-dependent TIM barrel enzymes"/>
    <property type="match status" value="1"/>
</dbReference>
<dbReference type="HAMAP" id="MF_00152">
    <property type="entry name" value="Nfo"/>
    <property type="match status" value="1"/>
</dbReference>
<dbReference type="InterPro" id="IPR001719">
    <property type="entry name" value="AP_endonuc_2"/>
</dbReference>
<dbReference type="InterPro" id="IPR018246">
    <property type="entry name" value="AP_endonuc_F2_Zn_BS"/>
</dbReference>
<dbReference type="InterPro" id="IPR036237">
    <property type="entry name" value="Xyl_isomerase-like_sf"/>
</dbReference>
<dbReference type="InterPro" id="IPR013022">
    <property type="entry name" value="Xyl_isomerase-like_TIM-brl"/>
</dbReference>
<dbReference type="NCBIfam" id="TIGR00587">
    <property type="entry name" value="nfo"/>
    <property type="match status" value="1"/>
</dbReference>
<dbReference type="NCBIfam" id="NF002199">
    <property type="entry name" value="PRK01060.1-4"/>
    <property type="match status" value="1"/>
</dbReference>
<dbReference type="PANTHER" id="PTHR21445:SF0">
    <property type="entry name" value="APURINIC-APYRIMIDINIC ENDONUCLEASE"/>
    <property type="match status" value="1"/>
</dbReference>
<dbReference type="PANTHER" id="PTHR21445">
    <property type="entry name" value="ENDONUCLEASE IV ENDODEOXYRIBONUCLEASE IV"/>
    <property type="match status" value="1"/>
</dbReference>
<dbReference type="Pfam" id="PF01261">
    <property type="entry name" value="AP_endonuc_2"/>
    <property type="match status" value="1"/>
</dbReference>
<dbReference type="SMART" id="SM00518">
    <property type="entry name" value="AP2Ec"/>
    <property type="match status" value="1"/>
</dbReference>
<dbReference type="SUPFAM" id="SSF51658">
    <property type="entry name" value="Xylose isomerase-like"/>
    <property type="match status" value="1"/>
</dbReference>
<dbReference type="PROSITE" id="PS00729">
    <property type="entry name" value="AP_NUCLEASE_F2_1"/>
    <property type="match status" value="1"/>
</dbReference>
<dbReference type="PROSITE" id="PS00730">
    <property type="entry name" value="AP_NUCLEASE_F2_2"/>
    <property type="match status" value="1"/>
</dbReference>
<dbReference type="PROSITE" id="PS00731">
    <property type="entry name" value="AP_NUCLEASE_F2_3"/>
    <property type="match status" value="1"/>
</dbReference>
<dbReference type="PROSITE" id="PS51432">
    <property type="entry name" value="AP_NUCLEASE_F2_4"/>
    <property type="match status" value="1"/>
</dbReference>
<proteinExistence type="inferred from homology"/>
<keyword id="KW-0227">DNA damage</keyword>
<keyword id="KW-0234">DNA repair</keyword>
<keyword id="KW-0255">Endonuclease</keyword>
<keyword id="KW-0378">Hydrolase</keyword>
<keyword id="KW-0479">Metal-binding</keyword>
<keyword id="KW-0540">Nuclease</keyword>
<keyword id="KW-0862">Zinc</keyword>
<protein>
    <recommendedName>
        <fullName evidence="1">Probable endonuclease 4</fullName>
        <ecNumber evidence="1">3.1.21.2</ecNumber>
    </recommendedName>
    <alternativeName>
        <fullName evidence="1">Endodeoxyribonuclease IV</fullName>
    </alternativeName>
    <alternativeName>
        <fullName evidence="1">Endonuclease IV</fullName>
    </alternativeName>
</protein>
<reference key="1">
    <citation type="journal article" date="2011" name="J. Bacteriol.">
        <title>Comparative genomics of 28 Salmonella enterica isolates: evidence for CRISPR-mediated adaptive sublineage evolution.</title>
        <authorList>
            <person name="Fricke W.F."/>
            <person name="Mammel M.K."/>
            <person name="McDermott P.F."/>
            <person name="Tartera C."/>
            <person name="White D.G."/>
            <person name="Leclerc J.E."/>
            <person name="Ravel J."/>
            <person name="Cebula T.A."/>
        </authorList>
    </citation>
    <scope>NUCLEOTIDE SEQUENCE [LARGE SCALE GENOMIC DNA]</scope>
    <source>
        <strain>CT_02021853</strain>
    </source>
</reference>
<name>END4_SALDC</name>
<sequence>MKYIGAHVSAAGGLANAPARAAEIGATAFALFTKNQRQWRAAPLTPQVIDDFKIACEKYHFSAAQILPHDSYLINLGHPVSEALEKSRDAFLDEMQRCEQLGLTLLNFHPGSHLMQIAQEDCLARIAESINIALAQTEGVTAVIENTAGQGSNLGFEFEQLAAIIDGVEDKSRVGVCIDTCHAFAAGYDLRTPEACEKTFSEFGKIVGFQYLRGMHLNDAKSAFGSRVDRHHSLGEGNIGHDAFRWIMQDGRFDGIPLILETINPDIWAEEIAWLKAQQIAEAMA</sequence>
<comment type="function">
    <text evidence="1">Endonuclease IV plays a role in DNA repair. It cleaves phosphodiester bonds at apurinic or apyrimidinic (AP) sites, generating a 3'-hydroxyl group and a 5'-terminal sugar phosphate.</text>
</comment>
<comment type="catalytic activity">
    <reaction evidence="1">
        <text>Endonucleolytic cleavage to 5'-phosphooligonucleotide end-products.</text>
        <dbReference type="EC" id="3.1.21.2"/>
    </reaction>
</comment>
<comment type="cofactor">
    <cofactor evidence="1">
        <name>Zn(2+)</name>
        <dbReference type="ChEBI" id="CHEBI:29105"/>
    </cofactor>
    <text evidence="1">Binds 3 Zn(2+) ions.</text>
</comment>
<comment type="similarity">
    <text evidence="1">Belongs to the AP endonuclease 2 family.</text>
</comment>
<organism>
    <name type="scientific">Salmonella dublin (strain CT_02021853)</name>
    <dbReference type="NCBI Taxonomy" id="439851"/>
    <lineage>
        <taxon>Bacteria</taxon>
        <taxon>Pseudomonadati</taxon>
        <taxon>Pseudomonadota</taxon>
        <taxon>Gammaproteobacteria</taxon>
        <taxon>Enterobacterales</taxon>
        <taxon>Enterobacteriaceae</taxon>
        <taxon>Salmonella</taxon>
    </lineage>
</organism>
<feature type="chain" id="PRO_1000096899" description="Probable endonuclease 4">
    <location>
        <begin position="1"/>
        <end position="285"/>
    </location>
</feature>
<feature type="binding site" evidence="1">
    <location>
        <position position="69"/>
    </location>
    <ligand>
        <name>Zn(2+)</name>
        <dbReference type="ChEBI" id="CHEBI:29105"/>
        <label>1</label>
    </ligand>
</feature>
<feature type="binding site" evidence="1">
    <location>
        <position position="109"/>
    </location>
    <ligand>
        <name>Zn(2+)</name>
        <dbReference type="ChEBI" id="CHEBI:29105"/>
        <label>1</label>
    </ligand>
</feature>
<feature type="binding site" evidence="1">
    <location>
        <position position="145"/>
    </location>
    <ligand>
        <name>Zn(2+)</name>
        <dbReference type="ChEBI" id="CHEBI:29105"/>
        <label>1</label>
    </ligand>
</feature>
<feature type="binding site" evidence="1">
    <location>
        <position position="145"/>
    </location>
    <ligand>
        <name>Zn(2+)</name>
        <dbReference type="ChEBI" id="CHEBI:29105"/>
        <label>2</label>
    </ligand>
</feature>
<feature type="binding site" evidence="1">
    <location>
        <position position="179"/>
    </location>
    <ligand>
        <name>Zn(2+)</name>
        <dbReference type="ChEBI" id="CHEBI:29105"/>
        <label>2</label>
    </ligand>
</feature>
<feature type="binding site" evidence="1">
    <location>
        <position position="182"/>
    </location>
    <ligand>
        <name>Zn(2+)</name>
        <dbReference type="ChEBI" id="CHEBI:29105"/>
        <label>3</label>
    </ligand>
</feature>
<feature type="binding site" evidence="1">
    <location>
        <position position="216"/>
    </location>
    <ligand>
        <name>Zn(2+)</name>
        <dbReference type="ChEBI" id="CHEBI:29105"/>
        <label>2</label>
    </ligand>
</feature>
<feature type="binding site" evidence="1">
    <location>
        <position position="229"/>
    </location>
    <ligand>
        <name>Zn(2+)</name>
        <dbReference type="ChEBI" id="CHEBI:29105"/>
        <label>3</label>
    </ligand>
</feature>
<feature type="binding site" evidence="1">
    <location>
        <position position="231"/>
    </location>
    <ligand>
        <name>Zn(2+)</name>
        <dbReference type="ChEBI" id="CHEBI:29105"/>
        <label>3</label>
    </ligand>
</feature>
<feature type="binding site" evidence="1">
    <location>
        <position position="261"/>
    </location>
    <ligand>
        <name>Zn(2+)</name>
        <dbReference type="ChEBI" id="CHEBI:29105"/>
        <label>2</label>
    </ligand>
</feature>